<accession>Q8E9N2</accession>
<reference key="1">
    <citation type="journal article" date="2002" name="Nat. Biotechnol.">
        <title>Genome sequence of the dissimilatory metal ion-reducing bacterium Shewanella oneidensis.</title>
        <authorList>
            <person name="Heidelberg J.F."/>
            <person name="Paulsen I.T."/>
            <person name="Nelson K.E."/>
            <person name="Gaidos E.J."/>
            <person name="Nelson W.C."/>
            <person name="Read T.D."/>
            <person name="Eisen J.A."/>
            <person name="Seshadri R."/>
            <person name="Ward N.L."/>
            <person name="Methe B.A."/>
            <person name="Clayton R.A."/>
            <person name="Meyer T."/>
            <person name="Tsapin A."/>
            <person name="Scott J."/>
            <person name="Beanan M.J."/>
            <person name="Brinkac L.M."/>
            <person name="Daugherty S.C."/>
            <person name="DeBoy R.T."/>
            <person name="Dodson R.J."/>
            <person name="Durkin A.S."/>
            <person name="Haft D.H."/>
            <person name="Kolonay J.F."/>
            <person name="Madupu R."/>
            <person name="Peterson J.D."/>
            <person name="Umayam L.A."/>
            <person name="White O."/>
            <person name="Wolf A.M."/>
            <person name="Vamathevan J.J."/>
            <person name="Weidman J.F."/>
            <person name="Impraim M."/>
            <person name="Lee K."/>
            <person name="Berry K.J."/>
            <person name="Lee C."/>
            <person name="Mueller J."/>
            <person name="Khouri H.M."/>
            <person name="Gill J."/>
            <person name="Utterback T.R."/>
            <person name="McDonald L.A."/>
            <person name="Feldblyum T.V."/>
            <person name="Smith H.O."/>
            <person name="Venter J.C."/>
            <person name="Nealson K.H."/>
            <person name="Fraser C.M."/>
        </authorList>
    </citation>
    <scope>NUCLEOTIDE SEQUENCE [LARGE SCALE GENOMIC DNA]</scope>
    <source>
        <strain>ATCC 700550 / JCM 31522 / CIP 106686 / LMG 19005 / NCIMB 14063 / MR-1</strain>
    </source>
</reference>
<organism>
    <name type="scientific">Shewanella oneidensis (strain ATCC 700550 / JCM 31522 / CIP 106686 / LMG 19005 / NCIMB 14063 / MR-1)</name>
    <dbReference type="NCBI Taxonomy" id="211586"/>
    <lineage>
        <taxon>Bacteria</taxon>
        <taxon>Pseudomonadati</taxon>
        <taxon>Pseudomonadota</taxon>
        <taxon>Gammaproteobacteria</taxon>
        <taxon>Alteromonadales</taxon>
        <taxon>Shewanellaceae</taxon>
        <taxon>Shewanella</taxon>
    </lineage>
</organism>
<gene>
    <name evidence="1" type="primary">leuA</name>
    <name type="ordered locus">SO_4236</name>
</gene>
<comment type="function">
    <text evidence="1">Catalyzes the condensation of the acetyl group of acetyl-CoA with 3-methyl-2-oxobutanoate (2-ketoisovalerate) to form 3-carboxy-3-hydroxy-4-methylpentanoate (2-isopropylmalate).</text>
</comment>
<comment type="catalytic activity">
    <reaction evidence="1">
        <text>3-methyl-2-oxobutanoate + acetyl-CoA + H2O = (2S)-2-isopropylmalate + CoA + H(+)</text>
        <dbReference type="Rhea" id="RHEA:21524"/>
        <dbReference type="ChEBI" id="CHEBI:1178"/>
        <dbReference type="ChEBI" id="CHEBI:11851"/>
        <dbReference type="ChEBI" id="CHEBI:15377"/>
        <dbReference type="ChEBI" id="CHEBI:15378"/>
        <dbReference type="ChEBI" id="CHEBI:57287"/>
        <dbReference type="ChEBI" id="CHEBI:57288"/>
        <dbReference type="EC" id="2.3.3.13"/>
    </reaction>
</comment>
<comment type="cofactor">
    <cofactor evidence="1">
        <name>Mn(2+)</name>
        <dbReference type="ChEBI" id="CHEBI:29035"/>
    </cofactor>
</comment>
<comment type="pathway">
    <text evidence="1">Amino-acid biosynthesis; L-leucine biosynthesis; L-leucine from 3-methyl-2-oxobutanoate: step 1/4.</text>
</comment>
<comment type="subunit">
    <text evidence="1">Homodimer.</text>
</comment>
<comment type="subcellular location">
    <subcellularLocation>
        <location evidence="1">Cytoplasm</location>
    </subcellularLocation>
</comment>
<comment type="similarity">
    <text evidence="1">Belongs to the alpha-IPM synthase/homocitrate synthase family. LeuA type 1 subfamily.</text>
</comment>
<proteinExistence type="inferred from homology"/>
<name>LEU1_SHEON</name>
<dbReference type="EC" id="2.3.3.13" evidence="1"/>
<dbReference type="EMBL" id="AE014299">
    <property type="protein sequence ID" value="AAN57207.1"/>
    <property type="molecule type" value="Genomic_DNA"/>
</dbReference>
<dbReference type="RefSeq" id="NP_719763.1">
    <property type="nucleotide sequence ID" value="NC_004347.2"/>
</dbReference>
<dbReference type="RefSeq" id="WP_011073916.1">
    <property type="nucleotide sequence ID" value="NC_004347.2"/>
</dbReference>
<dbReference type="SMR" id="Q8E9N2"/>
<dbReference type="STRING" id="211586.SO_4236"/>
<dbReference type="PaxDb" id="211586-SO_4236"/>
<dbReference type="KEGG" id="son:SO_4236"/>
<dbReference type="PATRIC" id="fig|211586.12.peg.4095"/>
<dbReference type="eggNOG" id="COG0119">
    <property type="taxonomic scope" value="Bacteria"/>
</dbReference>
<dbReference type="HOGENOM" id="CLU_022158_0_1_6"/>
<dbReference type="OrthoDB" id="9803573at2"/>
<dbReference type="PhylomeDB" id="Q8E9N2"/>
<dbReference type="BioCyc" id="SONE211586:G1GMP-3913-MONOMER"/>
<dbReference type="UniPathway" id="UPA00048">
    <property type="reaction ID" value="UER00070"/>
</dbReference>
<dbReference type="Proteomes" id="UP000008186">
    <property type="component" value="Chromosome"/>
</dbReference>
<dbReference type="GO" id="GO:0005829">
    <property type="term" value="C:cytosol"/>
    <property type="evidence" value="ECO:0000318"/>
    <property type="project" value="GO_Central"/>
</dbReference>
<dbReference type="GO" id="GO:0003852">
    <property type="term" value="F:2-isopropylmalate synthase activity"/>
    <property type="evidence" value="ECO:0000318"/>
    <property type="project" value="GO_Central"/>
</dbReference>
<dbReference type="GO" id="GO:0003985">
    <property type="term" value="F:acetyl-CoA C-acetyltransferase activity"/>
    <property type="evidence" value="ECO:0007669"/>
    <property type="project" value="UniProtKB-UniRule"/>
</dbReference>
<dbReference type="GO" id="GO:0030145">
    <property type="term" value="F:manganese ion binding"/>
    <property type="evidence" value="ECO:0007669"/>
    <property type="project" value="UniProtKB-UniRule"/>
</dbReference>
<dbReference type="GO" id="GO:0009098">
    <property type="term" value="P:L-leucine biosynthetic process"/>
    <property type="evidence" value="ECO:0000318"/>
    <property type="project" value="GO_Central"/>
</dbReference>
<dbReference type="CDD" id="cd07940">
    <property type="entry name" value="DRE_TIM_IPMS"/>
    <property type="match status" value="1"/>
</dbReference>
<dbReference type="FunFam" id="1.10.238.260:FF:000001">
    <property type="entry name" value="2-isopropylmalate synthase"/>
    <property type="match status" value="1"/>
</dbReference>
<dbReference type="FunFam" id="3.20.20.70:FF:000010">
    <property type="entry name" value="2-isopropylmalate synthase"/>
    <property type="match status" value="1"/>
</dbReference>
<dbReference type="FunFam" id="3.30.160.270:FF:000001">
    <property type="entry name" value="2-isopropylmalate synthase"/>
    <property type="match status" value="1"/>
</dbReference>
<dbReference type="Gene3D" id="1.10.238.260">
    <property type="match status" value="1"/>
</dbReference>
<dbReference type="Gene3D" id="3.30.160.270">
    <property type="match status" value="1"/>
</dbReference>
<dbReference type="Gene3D" id="3.20.20.70">
    <property type="entry name" value="Aldolase class I"/>
    <property type="match status" value="1"/>
</dbReference>
<dbReference type="HAMAP" id="MF_01025">
    <property type="entry name" value="LeuA_type1"/>
    <property type="match status" value="1"/>
</dbReference>
<dbReference type="InterPro" id="IPR050073">
    <property type="entry name" value="2-IPM_HCS-like"/>
</dbReference>
<dbReference type="InterPro" id="IPR013709">
    <property type="entry name" value="2-isopropylmalate_synth_dimer"/>
</dbReference>
<dbReference type="InterPro" id="IPR002034">
    <property type="entry name" value="AIPM/Hcit_synth_CS"/>
</dbReference>
<dbReference type="InterPro" id="IPR013785">
    <property type="entry name" value="Aldolase_TIM"/>
</dbReference>
<dbReference type="InterPro" id="IPR054691">
    <property type="entry name" value="LeuA/HCS_post-cat"/>
</dbReference>
<dbReference type="InterPro" id="IPR036230">
    <property type="entry name" value="LeuA_allosteric_dom_sf"/>
</dbReference>
<dbReference type="InterPro" id="IPR005671">
    <property type="entry name" value="LeuA_bact_synth"/>
</dbReference>
<dbReference type="InterPro" id="IPR000891">
    <property type="entry name" value="PYR_CT"/>
</dbReference>
<dbReference type="NCBIfam" id="TIGR00973">
    <property type="entry name" value="leuA_bact"/>
    <property type="match status" value="1"/>
</dbReference>
<dbReference type="NCBIfam" id="NF002084">
    <property type="entry name" value="PRK00915.1-1"/>
    <property type="match status" value="1"/>
</dbReference>
<dbReference type="NCBIfam" id="NF002086">
    <property type="entry name" value="PRK00915.1-3"/>
    <property type="match status" value="1"/>
</dbReference>
<dbReference type="PANTHER" id="PTHR10277:SF9">
    <property type="entry name" value="2-ISOPROPYLMALATE SYNTHASE 1, CHLOROPLASTIC-RELATED"/>
    <property type="match status" value="1"/>
</dbReference>
<dbReference type="PANTHER" id="PTHR10277">
    <property type="entry name" value="HOMOCITRATE SYNTHASE-RELATED"/>
    <property type="match status" value="1"/>
</dbReference>
<dbReference type="Pfam" id="PF22617">
    <property type="entry name" value="HCS_D2"/>
    <property type="match status" value="1"/>
</dbReference>
<dbReference type="Pfam" id="PF00682">
    <property type="entry name" value="HMGL-like"/>
    <property type="match status" value="1"/>
</dbReference>
<dbReference type="Pfam" id="PF08502">
    <property type="entry name" value="LeuA_dimer"/>
    <property type="match status" value="1"/>
</dbReference>
<dbReference type="SMART" id="SM00917">
    <property type="entry name" value="LeuA_dimer"/>
    <property type="match status" value="1"/>
</dbReference>
<dbReference type="SUPFAM" id="SSF110921">
    <property type="entry name" value="2-isopropylmalate synthase LeuA, allosteric (dimerisation) domain"/>
    <property type="match status" value="1"/>
</dbReference>
<dbReference type="SUPFAM" id="SSF51569">
    <property type="entry name" value="Aldolase"/>
    <property type="match status" value="1"/>
</dbReference>
<dbReference type="PROSITE" id="PS00815">
    <property type="entry name" value="AIPM_HOMOCIT_SYNTH_1"/>
    <property type="match status" value="1"/>
</dbReference>
<dbReference type="PROSITE" id="PS00816">
    <property type="entry name" value="AIPM_HOMOCIT_SYNTH_2"/>
    <property type="match status" value="1"/>
</dbReference>
<dbReference type="PROSITE" id="PS50991">
    <property type="entry name" value="PYR_CT"/>
    <property type="match status" value="1"/>
</dbReference>
<feature type="chain" id="PRO_0000140376" description="2-isopropylmalate synthase">
    <location>
        <begin position="1"/>
        <end position="522"/>
    </location>
</feature>
<feature type="domain" description="Pyruvate carboxyltransferase" evidence="1">
    <location>
        <begin position="5"/>
        <end position="267"/>
    </location>
</feature>
<feature type="region of interest" description="Regulatory domain" evidence="1">
    <location>
        <begin position="392"/>
        <end position="522"/>
    </location>
</feature>
<feature type="binding site" evidence="1">
    <location>
        <position position="14"/>
    </location>
    <ligand>
        <name>Mn(2+)</name>
        <dbReference type="ChEBI" id="CHEBI:29035"/>
    </ligand>
</feature>
<feature type="binding site" evidence="1">
    <location>
        <position position="202"/>
    </location>
    <ligand>
        <name>Mn(2+)</name>
        <dbReference type="ChEBI" id="CHEBI:29035"/>
    </ligand>
</feature>
<feature type="binding site" evidence="1">
    <location>
        <position position="204"/>
    </location>
    <ligand>
        <name>Mn(2+)</name>
        <dbReference type="ChEBI" id="CHEBI:29035"/>
    </ligand>
</feature>
<feature type="binding site" evidence="1">
    <location>
        <position position="238"/>
    </location>
    <ligand>
        <name>Mn(2+)</name>
        <dbReference type="ChEBI" id="CHEBI:29035"/>
    </ligand>
</feature>
<keyword id="KW-0028">Amino-acid biosynthesis</keyword>
<keyword id="KW-0100">Branched-chain amino acid biosynthesis</keyword>
<keyword id="KW-0963">Cytoplasm</keyword>
<keyword id="KW-0432">Leucine biosynthesis</keyword>
<keyword id="KW-0464">Manganese</keyword>
<keyword id="KW-0479">Metal-binding</keyword>
<keyword id="KW-1185">Reference proteome</keyword>
<keyword id="KW-0808">Transferase</keyword>
<evidence type="ECO:0000255" key="1">
    <source>
        <dbReference type="HAMAP-Rule" id="MF_01025"/>
    </source>
</evidence>
<sequence>MSNRVIIFDTTLRDGEQALAASLSVKEKLQIAMALERLGVDVMEVGFPVSSPGDFESVQTIARTIKNSRVCALSRALEKDIDAAAQALSVAEQFRIHTFISTSTIHVESKLKRSFEQVLEMAVGAVKYARRFTDDVEFSCEDAGRTPIDNLCRMVEAAIHAGARTINIPDTVGYTVPSEFGSIIQTLFNRVPNIDQAIISVHCHDDLGLSVANSITAVQHGARQIECTMNGIGERAGNCSLEEIAMILATRKNLLGFETGINAKEIHRTSNLVSQLCNMPIQSNKAIVGANAFTHSSGIHQDGMLKAQNTYEIMTPESIGLNRNNLNMTSRSGRHVIKHRMEEMGYSSQDYNLDALYEQFLHLADKKGQVFDYDLEALAFIEAQAAEDNFYQLRQLVVQSDSTEGVATATVRIEVGGEIKTEAATGNGPVDAAYNAIARATDRRIDIISYKLGAKGVGQDALGQVDITAVYHEQNFHGVGLATDVVEASARALVHVMNLTCRADKVADYKQNMHKNRELGGV</sequence>
<protein>
    <recommendedName>
        <fullName evidence="1">2-isopropylmalate synthase</fullName>
        <ecNumber evidence="1">2.3.3.13</ecNumber>
    </recommendedName>
    <alternativeName>
        <fullName evidence="1">Alpha-IPM synthase</fullName>
    </alternativeName>
    <alternativeName>
        <fullName evidence="1">Alpha-isopropylmalate synthase</fullName>
    </alternativeName>
</protein>